<protein>
    <recommendedName>
        <fullName evidence="1">Probable dual-specificity RNA methyltransferase RlmN</fullName>
        <ecNumber evidence="1">2.1.1.192</ecNumber>
    </recommendedName>
    <alternativeName>
        <fullName evidence="1">23S rRNA (adenine(2503)-C(2))-methyltransferase</fullName>
    </alternativeName>
    <alternativeName>
        <fullName evidence="1">23S rRNA m2A2503 methyltransferase</fullName>
    </alternativeName>
    <alternativeName>
        <fullName evidence="1">Ribosomal RNA large subunit methyltransferase N</fullName>
    </alternativeName>
    <alternativeName>
        <fullName evidence="1">tRNA (adenine(37)-C(2))-methyltransferase</fullName>
    </alternativeName>
    <alternativeName>
        <fullName evidence="1">tRNA m2A37 methyltransferase</fullName>
    </alternativeName>
</protein>
<reference key="1">
    <citation type="journal article" date="2004" name="Science">
        <title>The complete genome sequence of Propionibacterium acnes, a commensal of human skin.</title>
        <authorList>
            <person name="Brueggemann H."/>
            <person name="Henne A."/>
            <person name="Hoster F."/>
            <person name="Liesegang H."/>
            <person name="Wiezer A."/>
            <person name="Strittmatter A."/>
            <person name="Hujer S."/>
            <person name="Duerre P."/>
            <person name="Gottschalk G."/>
        </authorList>
    </citation>
    <scope>NUCLEOTIDE SEQUENCE [LARGE SCALE GENOMIC DNA]</scope>
    <source>
        <strain>DSM 16379 / KPA171202</strain>
    </source>
</reference>
<comment type="function">
    <text evidence="1">Specifically methylates position 2 of adenine 2503 in 23S rRNA and position 2 of adenine 37 in tRNAs.</text>
</comment>
<comment type="catalytic activity">
    <reaction evidence="1">
        <text>adenosine(2503) in 23S rRNA + 2 reduced [2Fe-2S]-[ferredoxin] + 2 S-adenosyl-L-methionine = 2-methyladenosine(2503) in 23S rRNA + 5'-deoxyadenosine + L-methionine + 2 oxidized [2Fe-2S]-[ferredoxin] + S-adenosyl-L-homocysteine</text>
        <dbReference type="Rhea" id="RHEA:42916"/>
        <dbReference type="Rhea" id="RHEA-COMP:10000"/>
        <dbReference type="Rhea" id="RHEA-COMP:10001"/>
        <dbReference type="Rhea" id="RHEA-COMP:10152"/>
        <dbReference type="Rhea" id="RHEA-COMP:10282"/>
        <dbReference type="ChEBI" id="CHEBI:17319"/>
        <dbReference type="ChEBI" id="CHEBI:33737"/>
        <dbReference type="ChEBI" id="CHEBI:33738"/>
        <dbReference type="ChEBI" id="CHEBI:57844"/>
        <dbReference type="ChEBI" id="CHEBI:57856"/>
        <dbReference type="ChEBI" id="CHEBI:59789"/>
        <dbReference type="ChEBI" id="CHEBI:74411"/>
        <dbReference type="ChEBI" id="CHEBI:74497"/>
        <dbReference type="EC" id="2.1.1.192"/>
    </reaction>
</comment>
<comment type="catalytic activity">
    <reaction evidence="1">
        <text>adenosine(37) in tRNA + 2 reduced [2Fe-2S]-[ferredoxin] + 2 S-adenosyl-L-methionine = 2-methyladenosine(37) in tRNA + 5'-deoxyadenosine + L-methionine + 2 oxidized [2Fe-2S]-[ferredoxin] + S-adenosyl-L-homocysteine</text>
        <dbReference type="Rhea" id="RHEA:43332"/>
        <dbReference type="Rhea" id="RHEA-COMP:10000"/>
        <dbReference type="Rhea" id="RHEA-COMP:10001"/>
        <dbReference type="Rhea" id="RHEA-COMP:10162"/>
        <dbReference type="Rhea" id="RHEA-COMP:10485"/>
        <dbReference type="ChEBI" id="CHEBI:17319"/>
        <dbReference type="ChEBI" id="CHEBI:33737"/>
        <dbReference type="ChEBI" id="CHEBI:33738"/>
        <dbReference type="ChEBI" id="CHEBI:57844"/>
        <dbReference type="ChEBI" id="CHEBI:57856"/>
        <dbReference type="ChEBI" id="CHEBI:59789"/>
        <dbReference type="ChEBI" id="CHEBI:74411"/>
        <dbReference type="ChEBI" id="CHEBI:74497"/>
        <dbReference type="EC" id="2.1.1.192"/>
    </reaction>
</comment>
<comment type="cofactor">
    <cofactor evidence="1">
        <name>[4Fe-4S] cluster</name>
        <dbReference type="ChEBI" id="CHEBI:49883"/>
    </cofactor>
    <text evidence="1">Binds 1 [4Fe-4S] cluster. The cluster is coordinated with 3 cysteines and an exchangeable S-adenosyl-L-methionine.</text>
</comment>
<comment type="subcellular location">
    <subcellularLocation>
        <location evidence="1">Cytoplasm</location>
    </subcellularLocation>
</comment>
<comment type="miscellaneous">
    <text evidence="1">Reaction proceeds by a ping-pong mechanism involving intermediate methylation of a conserved cysteine residue.</text>
</comment>
<comment type="similarity">
    <text evidence="1">Belongs to the radical SAM superfamily. RlmN family.</text>
</comment>
<organism>
    <name type="scientific">Cutibacterium acnes (strain DSM 16379 / KPA171202)</name>
    <name type="common">Propionibacterium acnes</name>
    <dbReference type="NCBI Taxonomy" id="267747"/>
    <lineage>
        <taxon>Bacteria</taxon>
        <taxon>Bacillati</taxon>
        <taxon>Actinomycetota</taxon>
        <taxon>Actinomycetes</taxon>
        <taxon>Propionibacteriales</taxon>
        <taxon>Propionibacteriaceae</taxon>
        <taxon>Cutibacterium</taxon>
    </lineage>
</organism>
<name>RLMN_CUTAK</name>
<feature type="chain" id="PRO_0000350324" description="Probable dual-specificity RNA methyltransferase RlmN">
    <location>
        <begin position="1"/>
        <end position="405"/>
    </location>
</feature>
<feature type="domain" description="Radical SAM core" evidence="2">
    <location>
        <begin position="142"/>
        <end position="386"/>
    </location>
</feature>
<feature type="region of interest" description="Disordered" evidence="3">
    <location>
        <begin position="1"/>
        <end position="34"/>
    </location>
</feature>
<feature type="compositionally biased region" description="Low complexity" evidence="3">
    <location>
        <begin position="1"/>
        <end position="15"/>
    </location>
</feature>
<feature type="active site" description="Proton acceptor" evidence="1">
    <location>
        <position position="130"/>
    </location>
</feature>
<feature type="active site" description="S-methylcysteine intermediate" evidence="1">
    <location>
        <position position="391"/>
    </location>
</feature>
<feature type="binding site" evidence="1">
    <location>
        <position position="156"/>
    </location>
    <ligand>
        <name>[4Fe-4S] cluster</name>
        <dbReference type="ChEBI" id="CHEBI:49883"/>
        <note>4Fe-4S-S-AdoMet</note>
    </ligand>
</feature>
<feature type="binding site" evidence="1">
    <location>
        <position position="160"/>
    </location>
    <ligand>
        <name>[4Fe-4S] cluster</name>
        <dbReference type="ChEBI" id="CHEBI:49883"/>
        <note>4Fe-4S-S-AdoMet</note>
    </ligand>
</feature>
<feature type="binding site" evidence="1">
    <location>
        <position position="163"/>
    </location>
    <ligand>
        <name>[4Fe-4S] cluster</name>
        <dbReference type="ChEBI" id="CHEBI:49883"/>
        <note>4Fe-4S-S-AdoMet</note>
    </ligand>
</feature>
<feature type="binding site" evidence="1">
    <location>
        <begin position="211"/>
        <end position="212"/>
    </location>
    <ligand>
        <name>S-adenosyl-L-methionine</name>
        <dbReference type="ChEBI" id="CHEBI:59789"/>
    </ligand>
</feature>
<feature type="binding site" evidence="1">
    <location>
        <position position="245"/>
    </location>
    <ligand>
        <name>S-adenosyl-L-methionine</name>
        <dbReference type="ChEBI" id="CHEBI:59789"/>
    </ligand>
</feature>
<feature type="binding site" evidence="1">
    <location>
        <begin position="268"/>
        <end position="270"/>
    </location>
    <ligand>
        <name>S-adenosyl-L-methionine</name>
        <dbReference type="ChEBI" id="CHEBI:59789"/>
    </ligand>
</feature>
<feature type="binding site" evidence="1">
    <location>
        <position position="348"/>
    </location>
    <ligand>
        <name>S-adenosyl-L-methionine</name>
        <dbReference type="ChEBI" id="CHEBI:59789"/>
    </ligand>
</feature>
<feature type="disulfide bond" description="(transient)" evidence="1">
    <location>
        <begin position="149"/>
        <end position="391"/>
    </location>
</feature>
<accession>Q6A7K4</accession>
<evidence type="ECO:0000255" key="1">
    <source>
        <dbReference type="HAMAP-Rule" id="MF_01849"/>
    </source>
</evidence>
<evidence type="ECO:0000255" key="2">
    <source>
        <dbReference type="PROSITE-ProRule" id="PRU01266"/>
    </source>
</evidence>
<evidence type="ECO:0000256" key="3">
    <source>
        <dbReference type="SAM" id="MobiDB-lite"/>
    </source>
</evidence>
<keyword id="KW-0004">4Fe-4S</keyword>
<keyword id="KW-0963">Cytoplasm</keyword>
<keyword id="KW-1015">Disulfide bond</keyword>
<keyword id="KW-0408">Iron</keyword>
<keyword id="KW-0411">Iron-sulfur</keyword>
<keyword id="KW-0479">Metal-binding</keyword>
<keyword id="KW-0489">Methyltransferase</keyword>
<keyword id="KW-0698">rRNA processing</keyword>
<keyword id="KW-0949">S-adenosyl-L-methionine</keyword>
<keyword id="KW-0808">Transferase</keyword>
<keyword id="KW-0819">tRNA processing</keyword>
<proteinExistence type="inferred from homology"/>
<gene>
    <name evidence="1" type="primary">rlmN</name>
    <name type="ordered locus">PPA1514</name>
</gene>
<dbReference type="EC" id="2.1.1.192" evidence="1"/>
<dbReference type="EMBL" id="AE017283">
    <property type="protein sequence ID" value="AAT83261.1"/>
    <property type="molecule type" value="Genomic_DNA"/>
</dbReference>
<dbReference type="RefSeq" id="WP_002519293.1">
    <property type="nucleotide sequence ID" value="NZ_CP025935.1"/>
</dbReference>
<dbReference type="SMR" id="Q6A7K4"/>
<dbReference type="EnsemblBacteria" id="AAT83261">
    <property type="protein sequence ID" value="AAT83261"/>
    <property type="gene ID" value="PPA1514"/>
</dbReference>
<dbReference type="GeneID" id="92857498"/>
<dbReference type="KEGG" id="pac:PPA1514"/>
<dbReference type="eggNOG" id="COG0820">
    <property type="taxonomic scope" value="Bacteria"/>
</dbReference>
<dbReference type="HOGENOM" id="CLU_029101_0_2_11"/>
<dbReference type="Proteomes" id="UP000000603">
    <property type="component" value="Chromosome"/>
</dbReference>
<dbReference type="GO" id="GO:0005737">
    <property type="term" value="C:cytoplasm"/>
    <property type="evidence" value="ECO:0007669"/>
    <property type="project" value="UniProtKB-SubCell"/>
</dbReference>
<dbReference type="GO" id="GO:0051539">
    <property type="term" value="F:4 iron, 4 sulfur cluster binding"/>
    <property type="evidence" value="ECO:0007669"/>
    <property type="project" value="UniProtKB-UniRule"/>
</dbReference>
<dbReference type="GO" id="GO:0046872">
    <property type="term" value="F:metal ion binding"/>
    <property type="evidence" value="ECO:0007669"/>
    <property type="project" value="UniProtKB-KW"/>
</dbReference>
<dbReference type="GO" id="GO:0070040">
    <property type="term" value="F:rRNA (adenine(2503)-C2-)-methyltransferase activity"/>
    <property type="evidence" value="ECO:0007669"/>
    <property type="project" value="UniProtKB-UniRule"/>
</dbReference>
<dbReference type="GO" id="GO:0019843">
    <property type="term" value="F:rRNA binding"/>
    <property type="evidence" value="ECO:0007669"/>
    <property type="project" value="UniProtKB-UniRule"/>
</dbReference>
<dbReference type="GO" id="GO:0002935">
    <property type="term" value="F:tRNA (adenine(37)-C2)-methyltransferase activity"/>
    <property type="evidence" value="ECO:0007669"/>
    <property type="project" value="UniProtKB-UniRule"/>
</dbReference>
<dbReference type="GO" id="GO:0000049">
    <property type="term" value="F:tRNA binding"/>
    <property type="evidence" value="ECO:0007669"/>
    <property type="project" value="UniProtKB-UniRule"/>
</dbReference>
<dbReference type="GO" id="GO:0070475">
    <property type="term" value="P:rRNA base methylation"/>
    <property type="evidence" value="ECO:0007669"/>
    <property type="project" value="UniProtKB-UniRule"/>
</dbReference>
<dbReference type="GO" id="GO:0030488">
    <property type="term" value="P:tRNA methylation"/>
    <property type="evidence" value="ECO:0007669"/>
    <property type="project" value="UniProtKB-UniRule"/>
</dbReference>
<dbReference type="CDD" id="cd01335">
    <property type="entry name" value="Radical_SAM"/>
    <property type="match status" value="1"/>
</dbReference>
<dbReference type="FunFam" id="3.20.20.70:FF:000014">
    <property type="entry name" value="Probable dual-specificity RNA methyltransferase RlmN"/>
    <property type="match status" value="1"/>
</dbReference>
<dbReference type="Gene3D" id="1.10.150.530">
    <property type="match status" value="1"/>
</dbReference>
<dbReference type="Gene3D" id="3.20.20.70">
    <property type="entry name" value="Aldolase class I"/>
    <property type="match status" value="1"/>
</dbReference>
<dbReference type="HAMAP" id="MF_01849">
    <property type="entry name" value="RNA_methyltr_RlmN"/>
    <property type="match status" value="1"/>
</dbReference>
<dbReference type="InterPro" id="IPR013785">
    <property type="entry name" value="Aldolase_TIM"/>
</dbReference>
<dbReference type="InterPro" id="IPR040072">
    <property type="entry name" value="Methyltransferase_A"/>
</dbReference>
<dbReference type="InterPro" id="IPR027492">
    <property type="entry name" value="RNA_MTrfase_RlmN"/>
</dbReference>
<dbReference type="InterPro" id="IPR004383">
    <property type="entry name" value="rRNA_lsu_MTrfase_RlmN/Cfr"/>
</dbReference>
<dbReference type="InterPro" id="IPR007197">
    <property type="entry name" value="rSAM"/>
</dbReference>
<dbReference type="NCBIfam" id="TIGR00048">
    <property type="entry name" value="rRNA_mod_RlmN"/>
    <property type="match status" value="1"/>
</dbReference>
<dbReference type="PANTHER" id="PTHR30544">
    <property type="entry name" value="23S RRNA METHYLTRANSFERASE"/>
    <property type="match status" value="1"/>
</dbReference>
<dbReference type="PANTHER" id="PTHR30544:SF5">
    <property type="entry name" value="RADICAL SAM CORE DOMAIN-CONTAINING PROTEIN"/>
    <property type="match status" value="1"/>
</dbReference>
<dbReference type="Pfam" id="PF04055">
    <property type="entry name" value="Radical_SAM"/>
    <property type="match status" value="1"/>
</dbReference>
<dbReference type="PIRSF" id="PIRSF006004">
    <property type="entry name" value="CHP00048"/>
    <property type="match status" value="1"/>
</dbReference>
<dbReference type="SFLD" id="SFLDF00275">
    <property type="entry name" value="adenosine_C2_methyltransferase"/>
    <property type="match status" value="1"/>
</dbReference>
<dbReference type="SFLD" id="SFLDG01062">
    <property type="entry name" value="methyltransferase_(Class_A)"/>
    <property type="match status" value="1"/>
</dbReference>
<dbReference type="SUPFAM" id="SSF102114">
    <property type="entry name" value="Radical SAM enzymes"/>
    <property type="match status" value="1"/>
</dbReference>
<dbReference type="PROSITE" id="PS51918">
    <property type="entry name" value="RADICAL_SAM"/>
    <property type="match status" value="1"/>
</dbReference>
<sequence length="405" mass="44123">MSSTGSSVSTSGLVLPSTPLAEPGKEVPLVVNTPNRAKPPRHWIDLSIEERVQAVKDFGVPAFRARQISAHVFERWEVDPTQWTDLPKAARQEIADAWFPVLLTKVSQQSCDRGTTVKTLWRLHGGALVESVLMYYPATRHSAARATLCLSSQAGCGMACPFCATGQGGIQRNMSTAEIVSQVLAANRLIAAGEVPGASGRVHNIVFMGMGEPMANYRSVLTAIRTLTADGPDGVGMSARALTLSTVGLVPRIKALTQEGIPVTLAVSLHAPDDELRDELIPVNRRWKVDELLDAAWHYAEKTKRRVSIEYALMKDINDQADRAAVLARQIRRRGDWTWAHVNLIPLNPTPGSRWTASRPEDQDAFVETLERWKIPVTVRDTRGSEIDGACGQLAAVGRSEGLGS</sequence>